<dbReference type="EMBL" id="CP000468">
    <property type="protein sequence ID" value="ABJ03760.1"/>
    <property type="molecule type" value="Genomic_DNA"/>
</dbReference>
<dbReference type="RefSeq" id="WP_000331451.1">
    <property type="nucleotide sequence ID" value="NZ_CADILS010000031.1"/>
</dbReference>
<dbReference type="SMR" id="A1AJC0"/>
<dbReference type="GeneID" id="89519204"/>
<dbReference type="KEGG" id="ecv:APECO1_2177"/>
<dbReference type="HOGENOM" id="CLU_076075_2_0_6"/>
<dbReference type="Proteomes" id="UP000008216">
    <property type="component" value="Chromosome"/>
</dbReference>
<dbReference type="GO" id="GO:0005737">
    <property type="term" value="C:cytoplasm"/>
    <property type="evidence" value="ECO:0007669"/>
    <property type="project" value="UniProtKB-SubCell"/>
</dbReference>
<dbReference type="GO" id="GO:0046872">
    <property type="term" value="F:metal ion binding"/>
    <property type="evidence" value="ECO:0007669"/>
    <property type="project" value="UniProtKB-KW"/>
</dbReference>
<dbReference type="GO" id="GO:0030091">
    <property type="term" value="P:protein repair"/>
    <property type="evidence" value="ECO:0007669"/>
    <property type="project" value="UniProtKB-UniRule"/>
</dbReference>
<dbReference type="GO" id="GO:0051409">
    <property type="term" value="P:response to nitrosative stress"/>
    <property type="evidence" value="ECO:0007669"/>
    <property type="project" value="UniProtKB-UniRule"/>
</dbReference>
<dbReference type="GO" id="GO:0006979">
    <property type="term" value="P:response to oxidative stress"/>
    <property type="evidence" value="ECO:0007669"/>
    <property type="project" value="UniProtKB-UniRule"/>
</dbReference>
<dbReference type="CDD" id="cd12108">
    <property type="entry name" value="Hr-like"/>
    <property type="match status" value="1"/>
</dbReference>
<dbReference type="FunFam" id="1.20.120.520:FF:000001">
    <property type="entry name" value="Iron-sulfur cluster repair protein YtfE"/>
    <property type="match status" value="1"/>
</dbReference>
<dbReference type="Gene3D" id="1.20.120.520">
    <property type="entry name" value="nmb1532 protein domain like"/>
    <property type="match status" value="1"/>
</dbReference>
<dbReference type="HAMAP" id="MF_01606">
    <property type="entry name" value="RIC_YtfE"/>
    <property type="match status" value="1"/>
</dbReference>
<dbReference type="InterPro" id="IPR023742">
    <property type="entry name" value="FeS-repair_YftE"/>
</dbReference>
<dbReference type="InterPro" id="IPR012312">
    <property type="entry name" value="Hemerythrin-like"/>
</dbReference>
<dbReference type="InterPro" id="IPR019903">
    <property type="entry name" value="RIC_family"/>
</dbReference>
<dbReference type="NCBIfam" id="TIGR03652">
    <property type="entry name" value="FeS_repair_RIC"/>
    <property type="match status" value="1"/>
</dbReference>
<dbReference type="NCBIfam" id="NF008221">
    <property type="entry name" value="PRK10992.1"/>
    <property type="match status" value="1"/>
</dbReference>
<dbReference type="PANTHER" id="PTHR36438">
    <property type="entry name" value="IRON-SULFUR CLUSTER REPAIR PROTEIN YTFE"/>
    <property type="match status" value="1"/>
</dbReference>
<dbReference type="PANTHER" id="PTHR36438:SF1">
    <property type="entry name" value="IRON-SULFUR CLUSTER REPAIR PROTEIN YTFE"/>
    <property type="match status" value="1"/>
</dbReference>
<dbReference type="Pfam" id="PF01814">
    <property type="entry name" value="Hemerythrin"/>
    <property type="match status" value="1"/>
</dbReference>
<dbReference type="Pfam" id="PF04405">
    <property type="entry name" value="ScdA_N"/>
    <property type="match status" value="1"/>
</dbReference>
<gene>
    <name evidence="1" type="primary">ytfE</name>
    <name type="ordered locus">Ecok1_42660</name>
    <name type="ORF">APECO1_2177</name>
</gene>
<reference key="1">
    <citation type="journal article" date="2007" name="J. Bacteriol.">
        <title>The genome sequence of avian pathogenic Escherichia coli strain O1:K1:H7 shares strong similarities with human extraintestinal pathogenic E. coli genomes.</title>
        <authorList>
            <person name="Johnson T.J."/>
            <person name="Kariyawasam S."/>
            <person name="Wannemuehler Y."/>
            <person name="Mangiamele P."/>
            <person name="Johnson S.J."/>
            <person name="Doetkott C."/>
            <person name="Skyberg J.A."/>
            <person name="Lynne A.M."/>
            <person name="Johnson J.R."/>
            <person name="Nolan L.K."/>
        </authorList>
    </citation>
    <scope>NUCLEOTIDE SEQUENCE [LARGE SCALE GENOMIC DNA]</scope>
</reference>
<keyword id="KW-0963">Cytoplasm</keyword>
<keyword id="KW-0408">Iron</keyword>
<keyword id="KW-0479">Metal-binding</keyword>
<keyword id="KW-1185">Reference proteome</keyword>
<keyword id="KW-0346">Stress response</keyword>
<organism>
    <name type="scientific">Escherichia coli O1:K1 / APEC</name>
    <dbReference type="NCBI Taxonomy" id="405955"/>
    <lineage>
        <taxon>Bacteria</taxon>
        <taxon>Pseudomonadati</taxon>
        <taxon>Pseudomonadota</taxon>
        <taxon>Gammaproteobacteria</taxon>
        <taxon>Enterobacterales</taxon>
        <taxon>Enterobacteriaceae</taxon>
        <taxon>Escherichia</taxon>
    </lineage>
</organism>
<evidence type="ECO:0000255" key="1">
    <source>
        <dbReference type="HAMAP-Rule" id="MF_01606"/>
    </source>
</evidence>
<protein>
    <recommendedName>
        <fullName evidence="1">Iron-sulfur cluster repair protein YtfE</fullName>
    </recommendedName>
</protein>
<feature type="chain" id="PRO_0000291697" description="Iron-sulfur cluster repair protein YtfE">
    <location>
        <begin position="1"/>
        <end position="220"/>
    </location>
</feature>
<name>YTFE_ECOK1</name>
<comment type="function">
    <text evidence="1">Di-iron-containing protein involved in the repair of iron-sulfur clusters damaged by oxidative and nitrosative stress conditions.</text>
</comment>
<comment type="subunit">
    <text evidence="1">Homodimer.</text>
</comment>
<comment type="subcellular location">
    <subcellularLocation>
        <location evidence="1">Cytoplasm</location>
    </subcellularLocation>
</comment>
<comment type="similarity">
    <text evidence="1">Belongs to the RIC family. YtfE subfamily.</text>
</comment>
<accession>A1AJC0</accession>
<proteinExistence type="inferred from homology"/>
<sequence length="220" mass="24883">MAYRDQPLGELALSIPRASALFRKYDMDYCCGGKQTLARAAARKELDVDVIEAELAKLAEQPIEKDWRSAPLAEIIDHIIVRYHDRHREQLPELILQATKVERVHADKPSVPKGLTKYLTMLHEELSSHMMKEEQILFPMIKQGMGSQAMGPISVMESEHDEAGELLEVIKHTTNNVTPPPEACTTWKAMYNGINELIDDLMEHISLENNVLFPRALAGE</sequence>